<organism>
    <name type="scientific">Oryza sativa subsp. japonica</name>
    <name type="common">Rice</name>
    <dbReference type="NCBI Taxonomy" id="39947"/>
    <lineage>
        <taxon>Eukaryota</taxon>
        <taxon>Viridiplantae</taxon>
        <taxon>Streptophyta</taxon>
        <taxon>Embryophyta</taxon>
        <taxon>Tracheophyta</taxon>
        <taxon>Spermatophyta</taxon>
        <taxon>Magnoliopsida</taxon>
        <taxon>Liliopsida</taxon>
        <taxon>Poales</taxon>
        <taxon>Poaceae</taxon>
        <taxon>BOP clade</taxon>
        <taxon>Oryzoideae</taxon>
        <taxon>Oryzeae</taxon>
        <taxon>Oryzinae</taxon>
        <taxon>Oryza</taxon>
        <taxon>Oryza sativa</taxon>
    </lineage>
</organism>
<accession>Q10RZ1</accession>
<accession>A3ADZ2</accession>
<reference key="1">
    <citation type="journal article" date="2005" name="Genome Res.">
        <title>Sequence, annotation, and analysis of synteny between rice chromosome 3 and diverged grass species.</title>
        <authorList>
            <consortium name="The rice chromosome 3 sequencing consortium"/>
            <person name="Buell C.R."/>
            <person name="Yuan Q."/>
            <person name="Ouyang S."/>
            <person name="Liu J."/>
            <person name="Zhu W."/>
            <person name="Wang A."/>
            <person name="Maiti R."/>
            <person name="Haas B."/>
            <person name="Wortman J."/>
            <person name="Pertea M."/>
            <person name="Jones K.M."/>
            <person name="Kim M."/>
            <person name="Overton L."/>
            <person name="Tsitrin T."/>
            <person name="Fadrosh D."/>
            <person name="Bera J."/>
            <person name="Weaver B."/>
            <person name="Jin S."/>
            <person name="Johri S."/>
            <person name="Reardon M."/>
            <person name="Webb K."/>
            <person name="Hill J."/>
            <person name="Moffat K."/>
            <person name="Tallon L."/>
            <person name="Van Aken S."/>
            <person name="Lewis M."/>
            <person name="Utterback T."/>
            <person name="Feldblyum T."/>
            <person name="Zismann V."/>
            <person name="Iobst S."/>
            <person name="Hsiao J."/>
            <person name="de Vazeille A.R."/>
            <person name="Salzberg S.L."/>
            <person name="White O."/>
            <person name="Fraser C.M."/>
            <person name="Yu Y."/>
            <person name="Kim H."/>
            <person name="Rambo T."/>
            <person name="Currie J."/>
            <person name="Collura K."/>
            <person name="Kernodle-Thompson S."/>
            <person name="Wei F."/>
            <person name="Kudrna K."/>
            <person name="Ammiraju J.S.S."/>
            <person name="Luo M."/>
            <person name="Goicoechea J.L."/>
            <person name="Wing R.A."/>
            <person name="Henry D."/>
            <person name="Oates R."/>
            <person name="Palmer M."/>
            <person name="Pries G."/>
            <person name="Saski C."/>
            <person name="Simmons J."/>
            <person name="Soderlund C."/>
            <person name="Nelson W."/>
            <person name="de la Bastide M."/>
            <person name="Spiegel L."/>
            <person name="Nascimento L."/>
            <person name="Huang E."/>
            <person name="Preston R."/>
            <person name="Zutavern T."/>
            <person name="Palmer L."/>
            <person name="O'Shaughnessy A."/>
            <person name="Dike S."/>
            <person name="McCombie W.R."/>
            <person name="Minx P."/>
            <person name="Cordum H."/>
            <person name="Wilson R."/>
            <person name="Jin W."/>
            <person name="Lee H.R."/>
            <person name="Jiang J."/>
            <person name="Jackson S."/>
        </authorList>
    </citation>
    <scope>NUCLEOTIDE SEQUENCE [LARGE SCALE GENOMIC DNA]</scope>
    <source>
        <strain>cv. Nipponbare</strain>
    </source>
</reference>
<reference key="2">
    <citation type="journal article" date="2005" name="Nature">
        <title>The map-based sequence of the rice genome.</title>
        <authorList>
            <consortium name="International rice genome sequencing project (IRGSP)"/>
        </authorList>
    </citation>
    <scope>NUCLEOTIDE SEQUENCE [LARGE SCALE GENOMIC DNA]</scope>
    <source>
        <strain>cv. Nipponbare</strain>
    </source>
</reference>
<reference key="3">
    <citation type="journal article" date="2008" name="Nucleic Acids Res.">
        <title>The rice annotation project database (RAP-DB): 2008 update.</title>
        <authorList>
            <consortium name="The rice annotation project (RAP)"/>
        </authorList>
    </citation>
    <scope>GENOME REANNOTATION</scope>
    <source>
        <strain>cv. Nipponbare</strain>
    </source>
</reference>
<reference key="4">
    <citation type="journal article" date="2013" name="Rice">
        <title>Improvement of the Oryza sativa Nipponbare reference genome using next generation sequence and optical map data.</title>
        <authorList>
            <person name="Kawahara Y."/>
            <person name="de la Bastide M."/>
            <person name="Hamilton J.P."/>
            <person name="Kanamori H."/>
            <person name="McCombie W.R."/>
            <person name="Ouyang S."/>
            <person name="Schwartz D.C."/>
            <person name="Tanaka T."/>
            <person name="Wu J."/>
            <person name="Zhou S."/>
            <person name="Childs K.L."/>
            <person name="Davidson R.M."/>
            <person name="Lin H."/>
            <person name="Quesada-Ocampo L."/>
            <person name="Vaillancourt B."/>
            <person name="Sakai H."/>
            <person name="Lee S.S."/>
            <person name="Kim J."/>
            <person name="Numa H."/>
            <person name="Itoh T."/>
            <person name="Buell C.R."/>
            <person name="Matsumoto T."/>
        </authorList>
    </citation>
    <scope>GENOME REANNOTATION</scope>
    <source>
        <strain>cv. Nipponbare</strain>
    </source>
</reference>
<reference key="5">
    <citation type="journal article" date="2005" name="PLoS Biol.">
        <title>The genomes of Oryza sativa: a history of duplications.</title>
        <authorList>
            <person name="Yu J."/>
            <person name="Wang J."/>
            <person name="Lin W."/>
            <person name="Li S."/>
            <person name="Li H."/>
            <person name="Zhou J."/>
            <person name="Ni P."/>
            <person name="Dong W."/>
            <person name="Hu S."/>
            <person name="Zeng C."/>
            <person name="Zhang J."/>
            <person name="Zhang Y."/>
            <person name="Li R."/>
            <person name="Xu Z."/>
            <person name="Li S."/>
            <person name="Li X."/>
            <person name="Zheng H."/>
            <person name="Cong L."/>
            <person name="Lin L."/>
            <person name="Yin J."/>
            <person name="Geng J."/>
            <person name="Li G."/>
            <person name="Shi J."/>
            <person name="Liu J."/>
            <person name="Lv H."/>
            <person name="Li J."/>
            <person name="Wang J."/>
            <person name="Deng Y."/>
            <person name="Ran L."/>
            <person name="Shi X."/>
            <person name="Wang X."/>
            <person name="Wu Q."/>
            <person name="Li C."/>
            <person name="Ren X."/>
            <person name="Wang J."/>
            <person name="Wang X."/>
            <person name="Li D."/>
            <person name="Liu D."/>
            <person name="Zhang X."/>
            <person name="Ji Z."/>
            <person name="Zhao W."/>
            <person name="Sun Y."/>
            <person name="Zhang Z."/>
            <person name="Bao J."/>
            <person name="Han Y."/>
            <person name="Dong L."/>
            <person name="Ji J."/>
            <person name="Chen P."/>
            <person name="Wu S."/>
            <person name="Liu J."/>
            <person name="Xiao Y."/>
            <person name="Bu D."/>
            <person name="Tan J."/>
            <person name="Yang L."/>
            <person name="Ye C."/>
            <person name="Zhang J."/>
            <person name="Xu J."/>
            <person name="Zhou Y."/>
            <person name="Yu Y."/>
            <person name="Zhang B."/>
            <person name="Zhuang S."/>
            <person name="Wei H."/>
            <person name="Liu B."/>
            <person name="Lei M."/>
            <person name="Yu H."/>
            <person name="Li Y."/>
            <person name="Xu H."/>
            <person name="Wei S."/>
            <person name="He X."/>
            <person name="Fang L."/>
            <person name="Zhang Z."/>
            <person name="Zhang Y."/>
            <person name="Huang X."/>
            <person name="Su Z."/>
            <person name="Tong W."/>
            <person name="Li J."/>
            <person name="Tong Z."/>
            <person name="Li S."/>
            <person name="Ye J."/>
            <person name="Wang L."/>
            <person name="Fang L."/>
            <person name="Lei T."/>
            <person name="Chen C.-S."/>
            <person name="Chen H.-C."/>
            <person name="Xu Z."/>
            <person name="Li H."/>
            <person name="Huang H."/>
            <person name="Zhang F."/>
            <person name="Xu H."/>
            <person name="Li N."/>
            <person name="Zhao C."/>
            <person name="Li S."/>
            <person name="Dong L."/>
            <person name="Huang Y."/>
            <person name="Li L."/>
            <person name="Xi Y."/>
            <person name="Qi Q."/>
            <person name="Li W."/>
            <person name="Zhang B."/>
            <person name="Hu W."/>
            <person name="Zhang Y."/>
            <person name="Tian X."/>
            <person name="Jiao Y."/>
            <person name="Liang X."/>
            <person name="Jin J."/>
            <person name="Gao L."/>
            <person name="Zheng W."/>
            <person name="Hao B."/>
            <person name="Liu S.-M."/>
            <person name="Wang W."/>
            <person name="Yuan L."/>
            <person name="Cao M."/>
            <person name="McDermott J."/>
            <person name="Samudrala R."/>
            <person name="Wang J."/>
            <person name="Wong G.K.-S."/>
            <person name="Yang H."/>
        </authorList>
    </citation>
    <scope>NUCLEOTIDE SEQUENCE [LARGE SCALE GENOMIC DNA]</scope>
    <source>
        <strain>cv. Nipponbare</strain>
    </source>
</reference>
<reference key="6">
    <citation type="journal article" date="2003" name="Science">
        <title>Collection, mapping, and annotation of over 28,000 cDNA clones from japonica rice.</title>
        <authorList>
            <consortium name="The rice full-length cDNA consortium"/>
        </authorList>
    </citation>
    <scope>NUCLEOTIDE SEQUENCE [LARGE SCALE MRNA]</scope>
    <source>
        <strain>cv. Nipponbare</strain>
    </source>
</reference>
<reference key="7">
    <citation type="journal article" date="2011" name="Biosci. Biotechnol. Biochem.">
        <title>Characterization of recombinant beta-amylases from Oryza sativa.</title>
        <authorList>
            <person name="Koide T."/>
            <person name="Ohnishi Y."/>
            <person name="Horinouchi S."/>
        </authorList>
    </citation>
    <scope>FUNCTION</scope>
    <scope>CATALYTIC ACTIVITY</scope>
    <scope>BIOPHYSICOCHEMICAL PROPERTIES</scope>
</reference>
<sequence>MMSLNLAHQTGAAAAVAPAAPRTAVVAAAAGTVSAPAVAPAAAPSLQLQTQTVDPAAPAQGPDLPMAFQALVESLPEEQHPDVGGEERRKVGVPVYVMMPLDTVRKDGNGLNRRKAVEASLKALKSAGAEGIMVDVWWGIAECEGPGRYNFTGYMELMEMAKKNGLKVQAVMSFHQCGGNVGDSVTIPLPKWVLEEMDKDQDLAYTDRSGRRNYEYLSLGADAMPVLKGRTPVQCYGDFMRAFRDHFAAFMGNTIVEIQVGMGPAGELRYPSYPESNGTWRFPGIGEFQCYDRYMLSSLKAAAEAVGKPEWGNAGPGDSGGYNDWPEDSPFFRREGGWNTPYGEFFMSWYSQMLLEHGERILSAASGVYTGTPGVKISVKVAGIHWHYGTRSHAAELTAGYYNTRHHDGYQPIARMLARHGAVLNFTCVEMRNHEQPQDAQCRPEELVQQVAAAARESGVGLAGENALPRYDETAHDQIVTTAAEKAEEERMVAFTYLRMGPDLFQPDNWRRFAAFVKRMTESGVRDVCREQVEREAQGVAHATGSLVHEAAVALSN</sequence>
<proteinExistence type="evidence at protein level"/>
<comment type="function">
    <text evidence="4 6">Possesses beta-amylase activity in vitro (PubMed:21512221). May be involved in cold resistance by mediating the accumulation of maltose upon freezing stress, thus contributing to the protection of membranes (Probable).</text>
</comment>
<comment type="catalytic activity">
    <reaction evidence="4">
        <text>Hydrolysis of (1-&gt;4)-alpha-D-glucosidic linkages in polysaccharides so as to remove successive maltose units from the non-reducing ends of the chains.</text>
        <dbReference type="EC" id="3.2.1.2"/>
    </reaction>
</comment>
<comment type="biophysicochemical properties">
    <phDependence>
        <text evidence="4">Optimum pH is 5.5-6.0.</text>
    </phDependence>
    <temperatureDependence>
        <text evidence="4">Optimum temperature is 35 degrees Celsius.</text>
    </temperatureDependence>
</comment>
<comment type="subcellular location">
    <subcellularLocation>
        <location evidence="2">Plastid</location>
        <location evidence="2">Chloroplast</location>
    </subcellularLocation>
</comment>
<comment type="similarity">
    <text evidence="6">Belongs to the glycosyl hydrolase 14 family.</text>
</comment>
<comment type="sequence caution" evidence="6">
    <conflict type="erroneous initiation">
        <sequence resource="EMBL-CDS" id="EAZ25531"/>
    </conflict>
    <text>Truncated N-terminus.</text>
</comment>
<dbReference type="EC" id="3.2.1.2" evidence="4"/>
<dbReference type="EMBL" id="DP000009">
    <property type="protein sequence ID" value="ABF93905.1"/>
    <property type="molecule type" value="Genomic_DNA"/>
</dbReference>
<dbReference type="EMBL" id="AP008209">
    <property type="protein sequence ID" value="BAF10840.1"/>
    <property type="molecule type" value="Genomic_DNA"/>
</dbReference>
<dbReference type="EMBL" id="AP014959">
    <property type="protein sequence ID" value="BAS82226.1"/>
    <property type="molecule type" value="Genomic_DNA"/>
</dbReference>
<dbReference type="EMBL" id="CM000140">
    <property type="protein sequence ID" value="EAZ25531.1"/>
    <property type="status" value="ALT_INIT"/>
    <property type="molecule type" value="Genomic_DNA"/>
</dbReference>
<dbReference type="EMBL" id="AK068968">
    <property type="protein sequence ID" value="BAG91188.1"/>
    <property type="molecule type" value="mRNA"/>
</dbReference>
<dbReference type="SMR" id="Q10RZ1"/>
<dbReference type="FunCoup" id="Q10RZ1">
    <property type="interactions" value="583"/>
</dbReference>
<dbReference type="STRING" id="39947.Q10RZ1"/>
<dbReference type="CAZy" id="GH14">
    <property type="family name" value="Glycoside Hydrolase Family 14"/>
</dbReference>
<dbReference type="PaxDb" id="39947-Q10RZ1"/>
<dbReference type="EnsemblPlants" id="Os03t0141200-01">
    <property type="protein sequence ID" value="Os03t0141200-01"/>
    <property type="gene ID" value="Os03g0141200"/>
</dbReference>
<dbReference type="Gramene" id="Os03t0141200-01">
    <property type="protein sequence ID" value="Os03t0141200-01"/>
    <property type="gene ID" value="Os03g0141200"/>
</dbReference>
<dbReference type="KEGG" id="dosa:Os03g0141200"/>
<dbReference type="KEGG" id="osa:4331577"/>
<dbReference type="eggNOG" id="ENOG502QTBX">
    <property type="taxonomic scope" value="Eukaryota"/>
</dbReference>
<dbReference type="HOGENOM" id="CLU_016754_5_1_1"/>
<dbReference type="InParanoid" id="Q10RZ1"/>
<dbReference type="OMA" id="SNDREMC"/>
<dbReference type="OrthoDB" id="1660156at2759"/>
<dbReference type="Proteomes" id="UP000000763">
    <property type="component" value="Chromosome 3"/>
</dbReference>
<dbReference type="Proteomes" id="UP000007752">
    <property type="component" value="Chromosome 3"/>
</dbReference>
<dbReference type="Proteomes" id="UP000059680">
    <property type="component" value="Chromosome 3"/>
</dbReference>
<dbReference type="GO" id="GO:0009507">
    <property type="term" value="C:chloroplast"/>
    <property type="evidence" value="ECO:0007669"/>
    <property type="project" value="UniProtKB-SubCell"/>
</dbReference>
<dbReference type="GO" id="GO:0016161">
    <property type="term" value="F:beta-amylase activity"/>
    <property type="evidence" value="ECO:0007669"/>
    <property type="project" value="UniProtKB-EC"/>
</dbReference>
<dbReference type="GO" id="GO:0000272">
    <property type="term" value="P:polysaccharide catabolic process"/>
    <property type="evidence" value="ECO:0007669"/>
    <property type="project" value="UniProtKB-KW"/>
</dbReference>
<dbReference type="Gene3D" id="3.20.20.80">
    <property type="entry name" value="Glycosidases"/>
    <property type="match status" value="1"/>
</dbReference>
<dbReference type="InterPro" id="IPR001554">
    <property type="entry name" value="Glyco_hydro_14"/>
</dbReference>
<dbReference type="InterPro" id="IPR018238">
    <property type="entry name" value="Glyco_hydro_14_CS"/>
</dbReference>
<dbReference type="InterPro" id="IPR001371">
    <property type="entry name" value="Glyco_hydro_14B_pln"/>
</dbReference>
<dbReference type="InterPro" id="IPR017853">
    <property type="entry name" value="Glycoside_hydrolase_SF"/>
</dbReference>
<dbReference type="PANTHER" id="PTHR31352">
    <property type="entry name" value="BETA-AMYLASE 1, CHLOROPLASTIC"/>
    <property type="match status" value="1"/>
</dbReference>
<dbReference type="PANTHER" id="PTHR31352:SF54">
    <property type="entry name" value="BETA-AMYLASE 2, CHLOROPLASTIC"/>
    <property type="match status" value="1"/>
</dbReference>
<dbReference type="Pfam" id="PF01373">
    <property type="entry name" value="Glyco_hydro_14"/>
    <property type="match status" value="1"/>
</dbReference>
<dbReference type="PRINTS" id="PR00750">
    <property type="entry name" value="BETAAMYLASE"/>
</dbReference>
<dbReference type="PRINTS" id="PR00842">
    <property type="entry name" value="GLHYDLASE14B"/>
</dbReference>
<dbReference type="SUPFAM" id="SSF51445">
    <property type="entry name" value="(Trans)glycosidases"/>
    <property type="match status" value="1"/>
</dbReference>
<dbReference type="PROSITE" id="PS00506">
    <property type="entry name" value="BETA_AMYLASE_1"/>
    <property type="match status" value="1"/>
</dbReference>
<dbReference type="PROSITE" id="PS00679">
    <property type="entry name" value="BETA_AMYLASE_2"/>
    <property type="match status" value="1"/>
</dbReference>
<keyword id="KW-0119">Carbohydrate metabolism</keyword>
<keyword id="KW-0150">Chloroplast</keyword>
<keyword id="KW-0326">Glycosidase</keyword>
<keyword id="KW-0378">Hydrolase</keyword>
<keyword id="KW-0934">Plastid</keyword>
<keyword id="KW-0624">Polysaccharide degradation</keyword>
<keyword id="KW-1185">Reference proteome</keyword>
<keyword id="KW-0809">Transit peptide</keyword>
<evidence type="ECO:0000250" key="1">
    <source>
        <dbReference type="UniProtKB" id="P10538"/>
    </source>
</evidence>
<evidence type="ECO:0000255" key="2"/>
<evidence type="ECO:0000255" key="3">
    <source>
        <dbReference type="PROSITE-ProRule" id="PRU10050"/>
    </source>
</evidence>
<evidence type="ECO:0000269" key="4">
    <source>
    </source>
</evidence>
<evidence type="ECO:0000303" key="5">
    <source>
    </source>
</evidence>
<evidence type="ECO:0000305" key="6"/>
<evidence type="ECO:0000312" key="7">
    <source>
        <dbReference type="EMBL" id="ABF93905.1"/>
    </source>
</evidence>
<evidence type="ECO:0000312" key="8">
    <source>
        <dbReference type="EMBL" id="BAF10840.1"/>
    </source>
</evidence>
<evidence type="ECO:0000312" key="9">
    <source>
        <dbReference type="EMBL" id="EAZ25531.1"/>
    </source>
</evidence>
<feature type="transit peptide" description="Chloroplast" evidence="2">
    <location>
        <begin position="1"/>
        <end position="38"/>
    </location>
</feature>
<feature type="chain" id="PRO_0000440335" description="Beta-amylase 2, chloroplastic">
    <location>
        <begin position="39"/>
        <end position="557"/>
    </location>
</feature>
<feature type="active site" description="Proton donor" evidence="1 3">
    <location>
        <position position="267"/>
    </location>
</feature>
<feature type="active site" description="Proton acceptor" evidence="1">
    <location>
        <position position="465"/>
    </location>
</feature>
<feature type="binding site" evidence="1">
    <location>
        <position position="135"/>
    </location>
    <ligand>
        <name>substrate</name>
    </ligand>
</feature>
<feature type="binding site" evidence="1">
    <location>
        <position position="175"/>
    </location>
    <ligand>
        <name>substrate</name>
    </ligand>
</feature>
<feature type="binding site" evidence="1">
    <location>
        <position position="183"/>
    </location>
    <ligand>
        <name>substrate</name>
    </ligand>
</feature>
<feature type="binding site" evidence="1">
    <location>
        <position position="380"/>
    </location>
    <ligand>
        <name>substrate</name>
    </ligand>
</feature>
<feature type="binding site" evidence="1">
    <location>
        <position position="385"/>
    </location>
    <ligand>
        <name>substrate</name>
    </ligand>
</feature>
<feature type="binding site" evidence="1">
    <location>
        <position position="427"/>
    </location>
    <ligand>
        <name>substrate</name>
    </ligand>
</feature>
<feature type="binding site" evidence="1">
    <location>
        <begin position="466"/>
        <end position="467"/>
    </location>
    <ligand>
        <name>substrate</name>
    </ligand>
</feature>
<feature type="binding site" evidence="1">
    <location>
        <position position="499"/>
    </location>
    <ligand>
        <name>substrate</name>
    </ligand>
</feature>
<protein>
    <recommendedName>
        <fullName evidence="6">Beta-amylase 2, chloroplastic</fullName>
        <shortName evidence="5">OsBamy2</shortName>
        <ecNumber evidence="4">3.2.1.2</ecNumber>
    </recommendedName>
    <alternativeName>
        <fullName evidence="6">4-alpha-D-glucan maltohydrolase</fullName>
    </alternativeName>
</protein>
<gene>
    <name evidence="5" type="primary">BAMY2</name>
    <name evidence="8" type="ordered locus">Os03g0141200</name>
    <name evidence="7" type="ordered locus">LOC_Os03g04770</name>
    <name evidence="9" type="ORF">OsJ_09355</name>
</gene>
<name>BAMY2_ORYSJ</name>